<accession>Q3ABT5</accession>
<dbReference type="EC" id="6.1.1.20" evidence="1"/>
<dbReference type="EMBL" id="CP000141">
    <property type="protein sequence ID" value="ABB16138.1"/>
    <property type="molecule type" value="Genomic_DNA"/>
</dbReference>
<dbReference type="RefSeq" id="WP_011344474.1">
    <property type="nucleotide sequence ID" value="NC_007503.1"/>
</dbReference>
<dbReference type="SMR" id="Q3ABT5"/>
<dbReference type="FunCoup" id="Q3ABT5">
    <property type="interactions" value="432"/>
</dbReference>
<dbReference type="STRING" id="246194.CHY_1570"/>
<dbReference type="KEGG" id="chy:CHY_1570"/>
<dbReference type="eggNOG" id="COG0072">
    <property type="taxonomic scope" value="Bacteria"/>
</dbReference>
<dbReference type="HOGENOM" id="CLU_016891_0_0_9"/>
<dbReference type="InParanoid" id="Q3ABT5"/>
<dbReference type="OrthoDB" id="9805455at2"/>
<dbReference type="Proteomes" id="UP000002706">
    <property type="component" value="Chromosome"/>
</dbReference>
<dbReference type="GO" id="GO:0009328">
    <property type="term" value="C:phenylalanine-tRNA ligase complex"/>
    <property type="evidence" value="ECO:0007669"/>
    <property type="project" value="TreeGrafter"/>
</dbReference>
<dbReference type="GO" id="GO:0005524">
    <property type="term" value="F:ATP binding"/>
    <property type="evidence" value="ECO:0007669"/>
    <property type="project" value="UniProtKB-UniRule"/>
</dbReference>
<dbReference type="GO" id="GO:0140096">
    <property type="term" value="F:catalytic activity, acting on a protein"/>
    <property type="evidence" value="ECO:0007669"/>
    <property type="project" value="UniProtKB-ARBA"/>
</dbReference>
<dbReference type="GO" id="GO:0000287">
    <property type="term" value="F:magnesium ion binding"/>
    <property type="evidence" value="ECO:0007669"/>
    <property type="project" value="UniProtKB-UniRule"/>
</dbReference>
<dbReference type="GO" id="GO:0004826">
    <property type="term" value="F:phenylalanine-tRNA ligase activity"/>
    <property type="evidence" value="ECO:0007669"/>
    <property type="project" value="UniProtKB-UniRule"/>
</dbReference>
<dbReference type="GO" id="GO:0016740">
    <property type="term" value="F:transferase activity"/>
    <property type="evidence" value="ECO:0007669"/>
    <property type="project" value="UniProtKB-ARBA"/>
</dbReference>
<dbReference type="GO" id="GO:0000049">
    <property type="term" value="F:tRNA binding"/>
    <property type="evidence" value="ECO:0007669"/>
    <property type="project" value="UniProtKB-KW"/>
</dbReference>
<dbReference type="GO" id="GO:0006432">
    <property type="term" value="P:phenylalanyl-tRNA aminoacylation"/>
    <property type="evidence" value="ECO:0007669"/>
    <property type="project" value="UniProtKB-UniRule"/>
</dbReference>
<dbReference type="CDD" id="cd00769">
    <property type="entry name" value="PheRS_beta_core"/>
    <property type="match status" value="1"/>
</dbReference>
<dbReference type="CDD" id="cd02796">
    <property type="entry name" value="tRNA_bind_bactPheRS"/>
    <property type="match status" value="1"/>
</dbReference>
<dbReference type="FunFam" id="3.30.70.380:FF:000001">
    <property type="entry name" value="Phenylalanine--tRNA ligase beta subunit"/>
    <property type="match status" value="1"/>
</dbReference>
<dbReference type="FunFam" id="3.30.930.10:FF:000022">
    <property type="entry name" value="Phenylalanine--tRNA ligase beta subunit"/>
    <property type="match status" value="1"/>
</dbReference>
<dbReference type="FunFam" id="3.50.40.10:FF:000001">
    <property type="entry name" value="Phenylalanine--tRNA ligase beta subunit"/>
    <property type="match status" value="1"/>
</dbReference>
<dbReference type="Gene3D" id="3.30.56.10">
    <property type="match status" value="2"/>
</dbReference>
<dbReference type="Gene3D" id="3.30.930.10">
    <property type="entry name" value="Bira Bifunctional Protein, Domain 2"/>
    <property type="match status" value="1"/>
</dbReference>
<dbReference type="Gene3D" id="3.30.70.380">
    <property type="entry name" value="Ferrodoxin-fold anticodon-binding domain"/>
    <property type="match status" value="1"/>
</dbReference>
<dbReference type="Gene3D" id="2.40.50.140">
    <property type="entry name" value="Nucleic acid-binding proteins"/>
    <property type="match status" value="1"/>
</dbReference>
<dbReference type="Gene3D" id="3.50.40.10">
    <property type="entry name" value="Phenylalanyl-trna Synthetase, Chain B, domain 3"/>
    <property type="match status" value="1"/>
</dbReference>
<dbReference type="HAMAP" id="MF_00283">
    <property type="entry name" value="Phe_tRNA_synth_beta1"/>
    <property type="match status" value="1"/>
</dbReference>
<dbReference type="InterPro" id="IPR045864">
    <property type="entry name" value="aa-tRNA-synth_II/BPL/LPL"/>
</dbReference>
<dbReference type="InterPro" id="IPR005146">
    <property type="entry name" value="B3/B4_tRNA-bd"/>
</dbReference>
<dbReference type="InterPro" id="IPR009061">
    <property type="entry name" value="DNA-bd_dom_put_sf"/>
</dbReference>
<dbReference type="InterPro" id="IPR005121">
    <property type="entry name" value="Fdx_antiC-bd"/>
</dbReference>
<dbReference type="InterPro" id="IPR036690">
    <property type="entry name" value="Fdx_antiC-bd_sf"/>
</dbReference>
<dbReference type="InterPro" id="IPR012340">
    <property type="entry name" value="NA-bd_OB-fold"/>
</dbReference>
<dbReference type="InterPro" id="IPR045060">
    <property type="entry name" value="Phe-tRNA-ligase_IIc_bsu"/>
</dbReference>
<dbReference type="InterPro" id="IPR004532">
    <property type="entry name" value="Phe-tRNA-ligase_IIc_bsu_bact"/>
</dbReference>
<dbReference type="InterPro" id="IPR020825">
    <property type="entry name" value="Phe-tRNA_synthase-like_B3/B4"/>
</dbReference>
<dbReference type="InterPro" id="IPR041616">
    <property type="entry name" value="PheRS_beta_core"/>
</dbReference>
<dbReference type="InterPro" id="IPR002547">
    <property type="entry name" value="tRNA-bd_dom"/>
</dbReference>
<dbReference type="InterPro" id="IPR033714">
    <property type="entry name" value="tRNA_bind_bactPheRS"/>
</dbReference>
<dbReference type="InterPro" id="IPR005147">
    <property type="entry name" value="tRNA_synthase_B5-dom"/>
</dbReference>
<dbReference type="NCBIfam" id="TIGR00472">
    <property type="entry name" value="pheT_bact"/>
    <property type="match status" value="1"/>
</dbReference>
<dbReference type="PANTHER" id="PTHR10947:SF0">
    <property type="entry name" value="PHENYLALANINE--TRNA LIGASE BETA SUBUNIT"/>
    <property type="match status" value="1"/>
</dbReference>
<dbReference type="PANTHER" id="PTHR10947">
    <property type="entry name" value="PHENYLALANYL-TRNA SYNTHETASE BETA CHAIN AND LEUCINE-RICH REPEAT-CONTAINING PROTEIN 47"/>
    <property type="match status" value="1"/>
</dbReference>
<dbReference type="Pfam" id="PF03483">
    <property type="entry name" value="B3_4"/>
    <property type="match status" value="1"/>
</dbReference>
<dbReference type="Pfam" id="PF03484">
    <property type="entry name" value="B5"/>
    <property type="match status" value="1"/>
</dbReference>
<dbReference type="Pfam" id="PF03147">
    <property type="entry name" value="FDX-ACB"/>
    <property type="match status" value="1"/>
</dbReference>
<dbReference type="Pfam" id="PF01588">
    <property type="entry name" value="tRNA_bind"/>
    <property type="match status" value="1"/>
</dbReference>
<dbReference type="Pfam" id="PF17759">
    <property type="entry name" value="tRNA_synthFbeta"/>
    <property type="match status" value="1"/>
</dbReference>
<dbReference type="SMART" id="SM00873">
    <property type="entry name" value="B3_4"/>
    <property type="match status" value="1"/>
</dbReference>
<dbReference type="SMART" id="SM00874">
    <property type="entry name" value="B5"/>
    <property type="match status" value="1"/>
</dbReference>
<dbReference type="SMART" id="SM00896">
    <property type="entry name" value="FDX-ACB"/>
    <property type="match status" value="1"/>
</dbReference>
<dbReference type="SUPFAM" id="SSF54991">
    <property type="entry name" value="Anticodon-binding domain of PheRS"/>
    <property type="match status" value="1"/>
</dbReference>
<dbReference type="SUPFAM" id="SSF55681">
    <property type="entry name" value="Class II aaRS and biotin synthetases"/>
    <property type="match status" value="1"/>
</dbReference>
<dbReference type="SUPFAM" id="SSF50249">
    <property type="entry name" value="Nucleic acid-binding proteins"/>
    <property type="match status" value="1"/>
</dbReference>
<dbReference type="SUPFAM" id="SSF56037">
    <property type="entry name" value="PheT/TilS domain"/>
    <property type="match status" value="1"/>
</dbReference>
<dbReference type="SUPFAM" id="SSF46955">
    <property type="entry name" value="Putative DNA-binding domain"/>
    <property type="match status" value="1"/>
</dbReference>
<dbReference type="PROSITE" id="PS51483">
    <property type="entry name" value="B5"/>
    <property type="match status" value="1"/>
</dbReference>
<dbReference type="PROSITE" id="PS51447">
    <property type="entry name" value="FDX_ACB"/>
    <property type="match status" value="1"/>
</dbReference>
<dbReference type="PROSITE" id="PS50886">
    <property type="entry name" value="TRBD"/>
    <property type="match status" value="1"/>
</dbReference>
<feature type="chain" id="PRO_0000232051" description="Phenylalanine--tRNA ligase beta subunit">
    <location>
        <begin position="1"/>
        <end position="798"/>
    </location>
</feature>
<feature type="domain" description="tRNA-binding" evidence="1">
    <location>
        <begin position="38"/>
        <end position="148"/>
    </location>
</feature>
<feature type="domain" description="B5" evidence="1">
    <location>
        <begin position="400"/>
        <end position="475"/>
    </location>
</feature>
<feature type="domain" description="FDX-ACB" evidence="1">
    <location>
        <begin position="703"/>
        <end position="796"/>
    </location>
</feature>
<feature type="binding site" evidence="1">
    <location>
        <position position="453"/>
    </location>
    <ligand>
        <name>Mg(2+)</name>
        <dbReference type="ChEBI" id="CHEBI:18420"/>
        <note>shared with alpha subunit</note>
    </ligand>
</feature>
<feature type="binding site" evidence="1">
    <location>
        <position position="459"/>
    </location>
    <ligand>
        <name>Mg(2+)</name>
        <dbReference type="ChEBI" id="CHEBI:18420"/>
        <note>shared with alpha subunit</note>
    </ligand>
</feature>
<feature type="binding site" evidence="1">
    <location>
        <position position="462"/>
    </location>
    <ligand>
        <name>Mg(2+)</name>
        <dbReference type="ChEBI" id="CHEBI:18420"/>
        <note>shared with alpha subunit</note>
    </ligand>
</feature>
<feature type="binding site" evidence="1">
    <location>
        <position position="463"/>
    </location>
    <ligand>
        <name>Mg(2+)</name>
        <dbReference type="ChEBI" id="CHEBI:18420"/>
        <note>shared with alpha subunit</note>
    </ligand>
</feature>
<evidence type="ECO:0000255" key="1">
    <source>
        <dbReference type="HAMAP-Rule" id="MF_00283"/>
    </source>
</evidence>
<name>SYFB_CARHZ</name>
<keyword id="KW-0030">Aminoacyl-tRNA synthetase</keyword>
<keyword id="KW-0067">ATP-binding</keyword>
<keyword id="KW-0963">Cytoplasm</keyword>
<keyword id="KW-0436">Ligase</keyword>
<keyword id="KW-0460">Magnesium</keyword>
<keyword id="KW-0479">Metal-binding</keyword>
<keyword id="KW-0547">Nucleotide-binding</keyword>
<keyword id="KW-0648">Protein biosynthesis</keyword>
<keyword id="KW-1185">Reference proteome</keyword>
<keyword id="KW-0694">RNA-binding</keyword>
<keyword id="KW-0820">tRNA-binding</keyword>
<organism>
    <name type="scientific">Carboxydothermus hydrogenoformans (strain ATCC BAA-161 / DSM 6008 / Z-2901)</name>
    <dbReference type="NCBI Taxonomy" id="246194"/>
    <lineage>
        <taxon>Bacteria</taxon>
        <taxon>Bacillati</taxon>
        <taxon>Bacillota</taxon>
        <taxon>Clostridia</taxon>
        <taxon>Thermoanaerobacterales</taxon>
        <taxon>Thermoanaerobacteraceae</taxon>
        <taxon>Carboxydothermus</taxon>
    </lineage>
</organism>
<proteinExistence type="inferred from homology"/>
<sequence>MNISYNWLQEFCEIPYTAQELGEKLTSVGIAVEKVTYIGNYEKVVVGEVLEVENLPGTELFKTKVSTGKEIFEVVTGAKNVFAGFKYPFALPGAKLPNGITIEERRIRGVVSQGMLLSAEELGLLERKGAEPGLMLLPPEAPVGEKIEKVLELDDYLLELDLTPNRGDCLSVLGVAREVAALTGHRLKLAEPELPLDNGSCPVSIEIQNPELCGRYMGIVIKNVKVGPSPLWLEQRLRKAGIRPINNIVDVTNYILLEYGQPLHAFDLDKLASPEIIVRNARAGEKITTLDGVERELTSEMLVIADREKPIAVAGIMGGQNTEVDDDTKTVFIEAAWFNPVSVRKTARKLGLRTDASQRFEKNVDIEGIKRALIKAALMICELAGGTIQGRYGDVYPKKFTPKVIAVSLSRAEEFLGISLDAKRVVEILESLGFRVTIGEKKIFVEVPSYRPDVSLEADIYEEIARYLGYNNFPDTMPIGITTTGFSPEYNFEYKVKNLLTALGMQEIITYSFINPDSYNKLGLSVDEVLTKSVVLLNPLSIEQSVMRTTLLPGLLDIAKRNENRQQENLLLFEMGNVFEKNGEDLPKETKLIGGIALGYRYGDWYNKPRKYDFYYVKGILESLFTSLGINNFSFSAAKDLPFLHPGKAARVYLENTEIGYLGELHPLVQKKYEFKNTPLVFELNYDLLKTLIPAEKKYTPLSPYPEVKRDIALLVEREIPAATFIEVIKGLAINTLKNIEIFDVYEGEKLGPNKKSIAISLTFSSTEKTLSEEEINNFMAQVLKALEAKTGAKLRTF</sequence>
<comment type="catalytic activity">
    <reaction evidence="1">
        <text>tRNA(Phe) + L-phenylalanine + ATP = L-phenylalanyl-tRNA(Phe) + AMP + diphosphate + H(+)</text>
        <dbReference type="Rhea" id="RHEA:19413"/>
        <dbReference type="Rhea" id="RHEA-COMP:9668"/>
        <dbReference type="Rhea" id="RHEA-COMP:9699"/>
        <dbReference type="ChEBI" id="CHEBI:15378"/>
        <dbReference type="ChEBI" id="CHEBI:30616"/>
        <dbReference type="ChEBI" id="CHEBI:33019"/>
        <dbReference type="ChEBI" id="CHEBI:58095"/>
        <dbReference type="ChEBI" id="CHEBI:78442"/>
        <dbReference type="ChEBI" id="CHEBI:78531"/>
        <dbReference type="ChEBI" id="CHEBI:456215"/>
        <dbReference type="EC" id="6.1.1.20"/>
    </reaction>
</comment>
<comment type="cofactor">
    <cofactor evidence="1">
        <name>Mg(2+)</name>
        <dbReference type="ChEBI" id="CHEBI:18420"/>
    </cofactor>
    <text evidence="1">Binds 2 magnesium ions per tetramer.</text>
</comment>
<comment type="subunit">
    <text evidence="1">Tetramer of two alpha and two beta subunits.</text>
</comment>
<comment type="subcellular location">
    <subcellularLocation>
        <location evidence="1">Cytoplasm</location>
    </subcellularLocation>
</comment>
<comment type="similarity">
    <text evidence="1">Belongs to the phenylalanyl-tRNA synthetase beta subunit family. Type 1 subfamily.</text>
</comment>
<gene>
    <name evidence="1" type="primary">pheT</name>
    <name type="ordered locus">CHY_1570</name>
</gene>
<reference key="1">
    <citation type="journal article" date="2005" name="PLoS Genet.">
        <title>Life in hot carbon monoxide: the complete genome sequence of Carboxydothermus hydrogenoformans Z-2901.</title>
        <authorList>
            <person name="Wu M."/>
            <person name="Ren Q."/>
            <person name="Durkin A.S."/>
            <person name="Daugherty S.C."/>
            <person name="Brinkac L.M."/>
            <person name="Dodson R.J."/>
            <person name="Madupu R."/>
            <person name="Sullivan S.A."/>
            <person name="Kolonay J.F."/>
            <person name="Nelson W.C."/>
            <person name="Tallon L.J."/>
            <person name="Jones K.M."/>
            <person name="Ulrich L.E."/>
            <person name="Gonzalez J.M."/>
            <person name="Zhulin I.B."/>
            <person name="Robb F.T."/>
            <person name="Eisen J.A."/>
        </authorList>
    </citation>
    <scope>NUCLEOTIDE SEQUENCE [LARGE SCALE GENOMIC DNA]</scope>
    <source>
        <strain>ATCC BAA-161 / DSM 6008 / Z-2901</strain>
    </source>
</reference>
<protein>
    <recommendedName>
        <fullName evidence="1">Phenylalanine--tRNA ligase beta subunit</fullName>
        <ecNumber evidence="1">6.1.1.20</ecNumber>
    </recommendedName>
    <alternativeName>
        <fullName evidence="1">Phenylalanyl-tRNA synthetase beta subunit</fullName>
        <shortName evidence="1">PheRS</shortName>
    </alternativeName>
</protein>